<sequence length="79" mass="9301">MEKMVKFNLRYDELLKKIPYKYAIPVVVAKRAEAIREYAKPFVITDDENPVSIAFMELSLNYIRIKNEEILKALIPKVK</sequence>
<protein>
    <recommendedName>
        <fullName evidence="1">DNA-directed RNA polymerase subunit omega</fullName>
        <shortName evidence="1">RNAP omega subunit</shortName>
        <ecNumber evidence="1">2.7.7.6</ecNumber>
    </recommendedName>
    <alternativeName>
        <fullName evidence="1">RNA polymerase omega subunit</fullName>
    </alternativeName>
    <alternativeName>
        <fullName evidence="1">Transcriptase subunit omega</fullName>
    </alternativeName>
</protein>
<organism>
    <name type="scientific">Thermotoga petrophila (strain ATCC BAA-488 / DSM 13995 / JCM 10881 / RKU-1)</name>
    <dbReference type="NCBI Taxonomy" id="390874"/>
    <lineage>
        <taxon>Bacteria</taxon>
        <taxon>Thermotogati</taxon>
        <taxon>Thermotogota</taxon>
        <taxon>Thermotogae</taxon>
        <taxon>Thermotogales</taxon>
        <taxon>Thermotogaceae</taxon>
        <taxon>Thermotoga</taxon>
    </lineage>
</organism>
<gene>
    <name evidence="1" type="primary">rpoZ</name>
    <name type="ordered locus">Tpet_0984</name>
</gene>
<comment type="function">
    <text evidence="1">Promotes RNA polymerase assembly. Latches the N- and C-terminal regions of the beta' subunit thereby facilitating its interaction with the beta and alpha subunits.</text>
</comment>
<comment type="catalytic activity">
    <reaction evidence="1">
        <text>RNA(n) + a ribonucleoside 5'-triphosphate = RNA(n+1) + diphosphate</text>
        <dbReference type="Rhea" id="RHEA:21248"/>
        <dbReference type="Rhea" id="RHEA-COMP:14527"/>
        <dbReference type="Rhea" id="RHEA-COMP:17342"/>
        <dbReference type="ChEBI" id="CHEBI:33019"/>
        <dbReference type="ChEBI" id="CHEBI:61557"/>
        <dbReference type="ChEBI" id="CHEBI:140395"/>
        <dbReference type="EC" id="2.7.7.6"/>
    </reaction>
</comment>
<comment type="subunit">
    <text evidence="1">The RNAP catalytic core consists of 2 alpha, 1 beta, 1 beta' and 1 omega subunit. When a sigma factor is associated with the core the holoenzyme is formed, which can initiate transcription.</text>
</comment>
<comment type="similarity">
    <text evidence="1">Belongs to the RNA polymerase subunit omega family.</text>
</comment>
<feature type="chain" id="PRO_1000006034" description="DNA-directed RNA polymerase subunit omega">
    <location>
        <begin position="1"/>
        <end position="79"/>
    </location>
</feature>
<keyword id="KW-0240">DNA-directed RNA polymerase</keyword>
<keyword id="KW-0548">Nucleotidyltransferase</keyword>
<keyword id="KW-0804">Transcription</keyword>
<keyword id="KW-0808">Transferase</keyword>
<reference key="1">
    <citation type="submission" date="2007-05" db="EMBL/GenBank/DDBJ databases">
        <title>Complete sequence of Thermotoga petrophila RKU-1.</title>
        <authorList>
            <consortium name="US DOE Joint Genome Institute"/>
            <person name="Copeland A."/>
            <person name="Lucas S."/>
            <person name="Lapidus A."/>
            <person name="Barry K."/>
            <person name="Glavina del Rio T."/>
            <person name="Dalin E."/>
            <person name="Tice H."/>
            <person name="Pitluck S."/>
            <person name="Sims D."/>
            <person name="Brettin T."/>
            <person name="Bruce D."/>
            <person name="Detter J.C."/>
            <person name="Han C."/>
            <person name="Tapia R."/>
            <person name="Schmutz J."/>
            <person name="Larimer F."/>
            <person name="Land M."/>
            <person name="Hauser L."/>
            <person name="Kyrpides N."/>
            <person name="Mikhailova N."/>
            <person name="Nelson K."/>
            <person name="Gogarten J.P."/>
            <person name="Noll K."/>
            <person name="Richardson P."/>
        </authorList>
    </citation>
    <scope>NUCLEOTIDE SEQUENCE [LARGE SCALE GENOMIC DNA]</scope>
    <source>
        <strain>ATCC BAA-488 / DSM 13995 / JCM 10881 / RKU-1</strain>
    </source>
</reference>
<proteinExistence type="inferred from homology"/>
<name>RPOZ_THEP1</name>
<evidence type="ECO:0000255" key="1">
    <source>
        <dbReference type="HAMAP-Rule" id="MF_00366"/>
    </source>
</evidence>
<accession>A5ILC9</accession>
<dbReference type="EC" id="2.7.7.6" evidence="1"/>
<dbReference type="EMBL" id="CP000702">
    <property type="protein sequence ID" value="ABQ47002.1"/>
    <property type="molecule type" value="Genomic_DNA"/>
</dbReference>
<dbReference type="RefSeq" id="WP_011943541.1">
    <property type="nucleotide sequence ID" value="NC_009486.1"/>
</dbReference>
<dbReference type="SMR" id="A5ILC9"/>
<dbReference type="STRING" id="390874.Tpet_0984"/>
<dbReference type="KEGG" id="tpt:Tpet_0984"/>
<dbReference type="eggNOG" id="COG1758">
    <property type="taxonomic scope" value="Bacteria"/>
</dbReference>
<dbReference type="HOGENOM" id="CLU_125406_4_0_0"/>
<dbReference type="Proteomes" id="UP000006558">
    <property type="component" value="Chromosome"/>
</dbReference>
<dbReference type="GO" id="GO:0000428">
    <property type="term" value="C:DNA-directed RNA polymerase complex"/>
    <property type="evidence" value="ECO:0007669"/>
    <property type="project" value="UniProtKB-KW"/>
</dbReference>
<dbReference type="GO" id="GO:0003677">
    <property type="term" value="F:DNA binding"/>
    <property type="evidence" value="ECO:0007669"/>
    <property type="project" value="UniProtKB-UniRule"/>
</dbReference>
<dbReference type="GO" id="GO:0003899">
    <property type="term" value="F:DNA-directed RNA polymerase activity"/>
    <property type="evidence" value="ECO:0007669"/>
    <property type="project" value="UniProtKB-UniRule"/>
</dbReference>
<dbReference type="GO" id="GO:0006351">
    <property type="term" value="P:DNA-templated transcription"/>
    <property type="evidence" value="ECO:0007669"/>
    <property type="project" value="UniProtKB-UniRule"/>
</dbReference>
<dbReference type="Gene3D" id="3.90.940.10">
    <property type="match status" value="1"/>
</dbReference>
<dbReference type="HAMAP" id="MF_00366">
    <property type="entry name" value="RNApol_bact_RpoZ"/>
    <property type="match status" value="1"/>
</dbReference>
<dbReference type="InterPro" id="IPR003716">
    <property type="entry name" value="DNA-dir_RNA_pol_omega"/>
</dbReference>
<dbReference type="InterPro" id="IPR006110">
    <property type="entry name" value="Pol_omega/Rpo6/RPB6"/>
</dbReference>
<dbReference type="InterPro" id="IPR036161">
    <property type="entry name" value="RPB6/omega-like_sf"/>
</dbReference>
<dbReference type="Pfam" id="PF01192">
    <property type="entry name" value="RNA_pol_Rpb6"/>
    <property type="match status" value="1"/>
</dbReference>
<dbReference type="SMART" id="SM01409">
    <property type="entry name" value="RNA_pol_Rpb6"/>
    <property type="match status" value="1"/>
</dbReference>
<dbReference type="SUPFAM" id="SSF63562">
    <property type="entry name" value="RPB6/omega subunit-like"/>
    <property type="match status" value="1"/>
</dbReference>